<evidence type="ECO:0000250" key="1"/>
<evidence type="ECO:0000255" key="2"/>
<sequence>MNMKILVLVAVLCLVVSTHAERHSKTDMEDSPMIQERKCLPPGKPCYGATQKIPCCGVCSHNNCT</sequence>
<proteinExistence type="evidence at transcript level"/>
<reference key="1">
    <citation type="journal article" date="2010" name="J. Proteome Res.">
        <title>Molecular diversification of peptide toxins from the tarantula Haplopelma hainanum (Ornithoctonus hainana) venom based on transcriptomic, peptidomic, and genomic analyses.</title>
        <authorList>
            <person name="Tang X."/>
            <person name="Zhang Y."/>
            <person name="Hu W."/>
            <person name="Xu D."/>
            <person name="Tao H."/>
            <person name="Yang X."/>
            <person name="Li Y."/>
            <person name="Jiang L."/>
            <person name="Liang S."/>
        </authorList>
    </citation>
    <scope>NUCLEOTIDE SEQUENCE [LARGE SCALE GENOMIC DNA / MRNA]</scope>
    <source>
        <tissue>Venom gland</tissue>
    </source>
</reference>
<organism>
    <name type="scientific">Cyriopagopus hainanus</name>
    <name type="common">Chinese bird spider</name>
    <name type="synonym">Haplopelma hainanum</name>
    <dbReference type="NCBI Taxonomy" id="209901"/>
    <lineage>
        <taxon>Eukaryota</taxon>
        <taxon>Metazoa</taxon>
        <taxon>Ecdysozoa</taxon>
        <taxon>Arthropoda</taxon>
        <taxon>Chelicerata</taxon>
        <taxon>Arachnida</taxon>
        <taxon>Araneae</taxon>
        <taxon>Mygalomorphae</taxon>
        <taxon>Theraphosidae</taxon>
        <taxon>Haplopelma</taxon>
    </lineage>
</organism>
<comment type="function">
    <text evidence="1">Reversibly blocks N-type calcium channels (Cav2.2/CACNA1B) in rat dorsal root ganglion cells. Elicits no toxic symptoms in either vertebrates or invertebrates during a period of 48 hours post-injection, when it was assayed in vivo by direct injection into mice and cockroaches (By similarity).</text>
</comment>
<comment type="subcellular location">
    <subcellularLocation>
        <location evidence="1">Secreted</location>
    </subcellularLocation>
</comment>
<comment type="tissue specificity">
    <text>Expressed by the venom gland.</text>
</comment>
<comment type="domain">
    <text evidence="1">The presence of a 'disulfide through disulfide knot' structurally defines this protein as a knottin.</text>
</comment>
<comment type="similarity">
    <text>Belongs to the neurotoxin 36 family. 02 subfamily.</text>
</comment>
<keyword id="KW-0108">Calcium channel impairing toxin</keyword>
<keyword id="KW-1015">Disulfide bond</keyword>
<keyword id="KW-0872">Ion channel impairing toxin</keyword>
<keyword id="KW-0960">Knottin</keyword>
<keyword id="KW-0528">Neurotoxin</keyword>
<keyword id="KW-0964">Secreted</keyword>
<keyword id="KW-0732">Signal</keyword>
<keyword id="KW-0800">Toxin</keyword>
<keyword id="KW-1218">Voltage-gated calcium channel impairing toxin</keyword>
<protein>
    <recommendedName>
        <fullName>Hainantoxin-X</fullName>
        <shortName>HNTX-X</shortName>
    </recommendedName>
</protein>
<dbReference type="EMBL" id="GU293001">
    <property type="protein sequence ID" value="ADB56817.1"/>
    <property type="molecule type" value="mRNA"/>
</dbReference>
<dbReference type="EMBL" id="GU293139">
    <property type="protein sequence ID" value="ADB56955.1"/>
    <property type="molecule type" value="Genomic_DNA"/>
</dbReference>
<dbReference type="SMR" id="D2Y2C4"/>
<dbReference type="ArachnoServer" id="AS001835">
    <property type="toxin name" value="omega-theraphotoxin-Hhn2a"/>
</dbReference>
<dbReference type="GO" id="GO:0005576">
    <property type="term" value="C:extracellular region"/>
    <property type="evidence" value="ECO:0007669"/>
    <property type="project" value="UniProtKB-SubCell"/>
</dbReference>
<dbReference type="GO" id="GO:0005246">
    <property type="term" value="F:calcium channel regulator activity"/>
    <property type="evidence" value="ECO:0007669"/>
    <property type="project" value="UniProtKB-KW"/>
</dbReference>
<dbReference type="GO" id="GO:0090729">
    <property type="term" value="F:toxin activity"/>
    <property type="evidence" value="ECO:0007669"/>
    <property type="project" value="UniProtKB-KW"/>
</dbReference>
<dbReference type="SUPFAM" id="SSF57059">
    <property type="entry name" value="omega toxin-like"/>
    <property type="match status" value="1"/>
</dbReference>
<feature type="signal peptide" evidence="2">
    <location>
        <begin position="1"/>
        <end position="20"/>
    </location>
</feature>
<feature type="propeptide" id="PRO_0000400968" evidence="1">
    <location>
        <begin position="21"/>
        <end position="37"/>
    </location>
</feature>
<feature type="peptide" id="PRO_0000400969" description="Hainantoxin-X">
    <location>
        <begin position="38"/>
        <end position="65"/>
    </location>
</feature>
<feature type="disulfide bond" evidence="1">
    <location>
        <begin position="39"/>
        <end position="56"/>
    </location>
</feature>
<feature type="disulfide bond" evidence="1">
    <location>
        <begin position="46"/>
        <end position="59"/>
    </location>
</feature>
<feature type="disulfide bond" evidence="1">
    <location>
        <begin position="55"/>
        <end position="64"/>
    </location>
</feature>
<accession>D2Y2C4</accession>
<name>H10A1_CYRHA</name>